<keyword id="KW-0007">Acetylation</keyword>
<keyword id="KW-0025">Alternative splicing</keyword>
<keyword id="KW-0968">Cytoplasmic vesicle</keyword>
<keyword id="KW-0903">Direct protein sequencing</keyword>
<keyword id="KW-0325">Glycoprotein</keyword>
<keyword id="KW-0378">Hydrolase</keyword>
<keyword id="KW-0443">Lipid metabolism</keyword>
<keyword id="KW-0472">Membrane</keyword>
<keyword id="KW-0488">Methylation</keyword>
<keyword id="KW-1208">Phospholipid metabolism</keyword>
<keyword id="KW-0597">Phosphoprotein</keyword>
<keyword id="KW-0904">Protein phosphatase</keyword>
<keyword id="KW-0675">Receptor</keyword>
<keyword id="KW-1185">Reference proteome</keyword>
<keyword id="KW-0732">Signal</keyword>
<keyword id="KW-0770">Synapse</keyword>
<keyword id="KW-0812">Transmembrane</keyword>
<keyword id="KW-1133">Transmembrane helix</keyword>
<comment type="function">
    <text evidence="2 3 8 9 12 13 15 18">Plays a role in vesicle-mediated secretory processes (PubMed:21732083). Required for normal accumulation of secretory vesicles in hippocampus, pituitary and pancreatic islets. Required for the accumulation of normal levels of insulin-containing vesicles and preventing their degradation (PubMed:21732083). Plays a role in insulin secretion in response to glucose stimuli (PubMed:15220191, PubMed:16418280, PubMed:21732083). Required for normal accumulation of the neurotransmitters norepinephrine, dopamine and serotonin in the brain. In females, but not in males, required for normal accumulation and secretion of pituitary hormones, such as luteinizing hormone (LH) and follicle-stimulating hormone (FSH) (PubMed:16269463). Required to maintain normal levels of renin expression and renin release (PubMed:19019914). May regulate catalytic active protein-tyrosine phosphatases such as PTPRA through dimerization (PubMed:12364328). Has phosphatidylinositol phosphatase activity; the PIPase activity is involved in its ability to regulate insulin secretion. Can dephosphorylate phosphatidylinositol 4,5-biphosphate (PI(4,5)P2), phosphatidylinositol 5-phosphate and phosphatidylinositol 3-phosphate (By similarity). Regulates PI(4,5)P2 level in the plasma membrane and localization of cofilin at the plasma membrane and thus is indirectly involved in regulation of actin dynamics related to cell migration and metastasis; upon hydrolysis of PI(4,5)P2 cofilin is released from the plasma membrane and acts in the cytoplasm in severing F-actin filaments (By similarity).</text>
</comment>
<comment type="catalytic activity">
    <reaction evidence="6">
        <text>O-phospho-L-tyrosyl-[protein] + H2O = L-tyrosyl-[protein] + phosphate</text>
        <dbReference type="Rhea" id="RHEA:10684"/>
        <dbReference type="Rhea" id="RHEA-COMP:10136"/>
        <dbReference type="Rhea" id="RHEA-COMP:20101"/>
        <dbReference type="ChEBI" id="CHEBI:15377"/>
        <dbReference type="ChEBI" id="CHEBI:43474"/>
        <dbReference type="ChEBI" id="CHEBI:46858"/>
        <dbReference type="ChEBI" id="CHEBI:61978"/>
        <dbReference type="EC" id="3.1.3.48"/>
    </reaction>
</comment>
<comment type="subunit">
    <text evidence="2 8 11 17">Self-associates. Interacts (via cytoplasmic domain) with PTPRN (via cytoplasmic domain) (PubMed:12364328). Interacts (precursor form) with CPE (PubMed:21210912). Interacts with HAP1 isoform A (PubMed:21544547). Interacts with AP2A1 or AP2A2 and AP1G1; indicative for an association with adaptor protein complex 2 (AP-2) and adaptor protein complex 1 (AP-1) (PubMed:16262730). Interacts with AP2M1; indicative for an association with adaptor protein complex 2 (AP-2). Interacts with MYO5A (By similarity).</text>
</comment>
<comment type="interaction">
    <interactant intactId="EBI-8538944">
        <id>P80560</id>
    </interactant>
    <interactant intactId="EBI-8328895">
        <id>Q60673</id>
        <label>Ptprn</label>
    </interactant>
    <organismsDiffer>false</organismsDiffer>
    <experiments>4</experiments>
</comment>
<comment type="subcellular location">
    <subcellularLocation>
        <location evidence="16">Cytoplasmic vesicle</location>
        <location evidence="16">Secretory vesicle membrane</location>
        <topology evidence="26">Single-pass type I membrane protein</topology>
    </subcellularLocation>
    <subcellularLocation>
        <location evidence="16">Cytoplasmic vesicle</location>
        <location evidence="16">Secretory vesicle</location>
        <location evidence="16">Synaptic vesicle membrane</location>
        <topology evidence="26">Single-pass type I membrane protein</topology>
    </subcellularLocation>
    <text evidence="2 10 17 26">Predominantly found on dense-core secretory granules. Sorting to secretory granules in part is dependent of the N-terminal pro domain of the precursor and its interaction with CPE. Transiently found at the cell membrane, when secretory vesicles fuse with the cell membrane to release their cargo. Is then endocytosed and recycled to secretory vesicles involving clathrin-dependent AP2-mediated endocytosis. Recycled via STX6- but not TTTGN1/TGN38-containing compartments.</text>
</comment>
<comment type="subcellular location">
    <molecule>IA-2beta60</molecule>
    <subcellularLocation>
        <location evidence="26">Cytoplasmic vesicle</location>
        <location evidence="26">Secretory vesicle membrane</location>
    </subcellularLocation>
</comment>
<comment type="alternative products">
    <event type="alternative splicing"/>
    <isoform>
        <id>P80560-1</id>
        <name>1</name>
        <name>Type 1-PTP-NP</name>
        <sequence type="displayed"/>
    </isoform>
    <isoform>
        <id>P80560-2</id>
        <name>2</name>
        <name>Type 2-PTP-NP</name>
        <sequence type="not described"/>
    </isoform>
    <text>Additional isoforms seem to exist.</text>
</comment>
<comment type="tissue specificity">
    <text evidence="9 16 19 20">Detected in brain (PubMed:15220191, PubMed:19361477). Detected in pancreas islets (at protein level) (PubMed:8681804). Detected in pancreas and brain (PubMed:8637868, PubMed:8681804).</text>
</comment>
<comment type="developmental stage">
    <text evidence="20">Expressed in early stages of pancreatic development. First expressed in 8.5 dpc embryos in the dorsal part of the midgut endoderm and by 9.5 dpc, in the pancreatic rudiment specifically in early endocrine progenitor cells. At later stages expressed in insulin- or glucagon-producing cells. During neural development, the type 2 PTP-NP is expressed in early stages of neurogenesis, and the type 1 weakly in the later stages.</text>
</comment>
<comment type="induction">
    <text evidence="13">By GHRL in brain, pancreas, and insulinoma cell lines.</text>
</comment>
<comment type="domain">
    <text evidence="2">The tyrosine-based internalization signal is proposed to function in clathrin-mediated endocytosis and recycling.</text>
</comment>
<comment type="domain">
    <text evidence="27">The leucine-based sorting signal is proposed to function in trafficking at the plasma membrane.</text>
</comment>
<comment type="PTM">
    <text evidence="14 19">Subject to proteolytic cleavage at multiple sites during maturation of secretory granules. In the brain at least IA-2beta71, IA-2beta64 and IA-2beta60 have been detected, in the pancreas and a pancreatic beta cell line only IA-2beta60 has been detected.</text>
</comment>
<comment type="disruption phenotype">
    <text evidence="9 12 16 18">Mice appear healthy and normal, but display mildly decreased glucose tolerance and impaired glucose-stimulated insulin secretion (PubMed:15220191). Pancreatic islets from mice lacking both Ptprn and Ptprn2 contain decreased numbers of insulin-containing vesicles and show a further decrease in insulin secretion after glucose stimuli (PubMed:21732083). Mice lacking both Ptprn and Ptprn2 appear normal, but have lower levels of the neurotransmitters norepinephrine, dopamine and serotonin in the brain. Likewise, they have decreased numbers of synaptic vesicles in the hippocampus and show decreased neurotransmitter release after K(+) stimulation; basal levels of neurotransmitter release are unaffected. They show increased anxiety-like behavior with strongly decreased exploratory activity and rearing. Besides, they show defects in remembering conditioned learning. With increasing age, mutant mice develop a tendency to suffer seizures and display a reduced life span; roughly half of the mutant mice are dead after 40 weeks (PubMed:19361477). The majority of female mice deficient in both Ptprn and Ptprn2 are infertile or have small litters, due to abnormalities of the estrous cycle and absence of corpora lutea. These defects are due to decreased levels of luteinizing hormone and follicle-stimulating hormone (FSH) in the pituitary and decreased levels of luteinizing hormone (LH) in the blood plasma. In contrast, male mice lacking both Ptprn and Ptprn2 display normal hormone levels and normal fertility (PubMed:16269463).</text>
</comment>
<comment type="similarity">
    <text evidence="26">Belongs to the protein-tyrosine phosphatase family.</text>
</comment>
<comment type="caution">
    <text evidence="26">Has no tyrosine-protein phosphatase activity at mild acidic conditions (pH 5.5). The in vivo relevance of the low PPase activity for the human protein at acidic conditions (pH 4.5) is questioned. This catalytic activity seems to be affected by the replacement of a highly conserved residue in the tyrosine-protein phosphatase domain.</text>
</comment>
<protein>
    <recommendedName>
        <fullName>Receptor-type tyrosine-protein phosphatase N2</fullName>
        <shortName>R-PTP-N2</shortName>
        <ecNumber>3.1.3.-</ecNumber>
        <ecNumber>3.1.3.48</ecNumber>
    </recommendedName>
    <alternativeName>
        <fullName evidence="24">PTP IA-2beta</fullName>
    </alternativeName>
    <alternativeName>
        <fullName evidence="21 23">Phogrin</fullName>
    </alternativeName>
    <alternativeName>
        <fullName>Protein tyrosine phosphatase-NP</fullName>
        <shortName evidence="25">PTP-NP</shortName>
    </alternativeName>
    <component>
        <recommendedName>
            <fullName evidence="22">IA-2beta71</fullName>
        </recommendedName>
    </component>
    <component>
        <recommendedName>
            <fullName evidence="22">IA-2beta64</fullName>
        </recommendedName>
    </component>
    <component>
        <recommendedName>
            <fullName evidence="22">IA-2beta60</fullName>
        </recommendedName>
    </component>
</protein>
<dbReference type="EC" id="3.1.3.-"/>
<dbReference type="EC" id="3.1.3.48"/>
<dbReference type="EMBL" id="U57345">
    <property type="protein sequence ID" value="AAB06945.1"/>
    <property type="molecule type" value="mRNA"/>
</dbReference>
<dbReference type="EMBL" id="U82439">
    <property type="protein sequence ID" value="AAB39996.1"/>
    <property type="molecule type" value="mRNA"/>
</dbReference>
<dbReference type="EMBL" id="BN000315">
    <property type="protein sequence ID" value="CAG23871.1"/>
    <property type="molecule type" value="Genomic_DNA"/>
</dbReference>
<dbReference type="EMBL" id="BN000293">
    <property type="protein sequence ID" value="CAG23871.1"/>
    <property type="status" value="JOINED"/>
    <property type="molecule type" value="Genomic_DNA"/>
</dbReference>
<dbReference type="EMBL" id="BN000294">
    <property type="protein sequence ID" value="CAG23871.1"/>
    <property type="status" value="JOINED"/>
    <property type="molecule type" value="Genomic_DNA"/>
</dbReference>
<dbReference type="EMBL" id="BN000295">
    <property type="protein sequence ID" value="CAG23871.1"/>
    <property type="status" value="JOINED"/>
    <property type="molecule type" value="Genomic_DNA"/>
</dbReference>
<dbReference type="EMBL" id="BN000296">
    <property type="protein sequence ID" value="CAG23871.1"/>
    <property type="status" value="JOINED"/>
    <property type="molecule type" value="Genomic_DNA"/>
</dbReference>
<dbReference type="EMBL" id="BN000297">
    <property type="protein sequence ID" value="CAG23871.1"/>
    <property type="status" value="JOINED"/>
    <property type="molecule type" value="Genomic_DNA"/>
</dbReference>
<dbReference type="EMBL" id="BN000298">
    <property type="protein sequence ID" value="CAG23871.1"/>
    <property type="status" value="JOINED"/>
    <property type="molecule type" value="Genomic_DNA"/>
</dbReference>
<dbReference type="EMBL" id="BN000299">
    <property type="protein sequence ID" value="CAG23871.1"/>
    <property type="status" value="JOINED"/>
    <property type="molecule type" value="Genomic_DNA"/>
</dbReference>
<dbReference type="EMBL" id="BN000300">
    <property type="protein sequence ID" value="CAG23871.1"/>
    <property type="status" value="JOINED"/>
    <property type="molecule type" value="Genomic_DNA"/>
</dbReference>
<dbReference type="EMBL" id="BN000301">
    <property type="protein sequence ID" value="CAG23871.1"/>
    <property type="status" value="JOINED"/>
    <property type="molecule type" value="Genomic_DNA"/>
</dbReference>
<dbReference type="EMBL" id="BN000302">
    <property type="protein sequence ID" value="CAG23871.1"/>
    <property type="status" value="JOINED"/>
    <property type="molecule type" value="Genomic_DNA"/>
</dbReference>
<dbReference type="EMBL" id="BN000303">
    <property type="protein sequence ID" value="CAG23871.1"/>
    <property type="status" value="JOINED"/>
    <property type="molecule type" value="Genomic_DNA"/>
</dbReference>
<dbReference type="EMBL" id="BN000304">
    <property type="protein sequence ID" value="CAG23871.1"/>
    <property type="status" value="JOINED"/>
    <property type="molecule type" value="Genomic_DNA"/>
</dbReference>
<dbReference type="EMBL" id="BN000305">
    <property type="protein sequence ID" value="CAG23871.1"/>
    <property type="status" value="JOINED"/>
    <property type="molecule type" value="Genomic_DNA"/>
</dbReference>
<dbReference type="EMBL" id="BN000306">
    <property type="protein sequence ID" value="CAG23871.1"/>
    <property type="status" value="JOINED"/>
    <property type="molecule type" value="Genomic_DNA"/>
</dbReference>
<dbReference type="EMBL" id="BN000307">
    <property type="protein sequence ID" value="CAG23871.1"/>
    <property type="status" value="JOINED"/>
    <property type="molecule type" value="Genomic_DNA"/>
</dbReference>
<dbReference type="EMBL" id="BN000308">
    <property type="protein sequence ID" value="CAG23871.1"/>
    <property type="status" value="JOINED"/>
    <property type="molecule type" value="Genomic_DNA"/>
</dbReference>
<dbReference type="EMBL" id="BN000309">
    <property type="protein sequence ID" value="CAG23871.1"/>
    <property type="status" value="JOINED"/>
    <property type="molecule type" value="Genomic_DNA"/>
</dbReference>
<dbReference type="EMBL" id="BN000310">
    <property type="protein sequence ID" value="CAG23871.1"/>
    <property type="status" value="JOINED"/>
    <property type="molecule type" value="Genomic_DNA"/>
</dbReference>
<dbReference type="EMBL" id="BN000311">
    <property type="protein sequence ID" value="CAG23871.1"/>
    <property type="status" value="JOINED"/>
    <property type="molecule type" value="Genomic_DNA"/>
</dbReference>
<dbReference type="EMBL" id="BN000312">
    <property type="protein sequence ID" value="CAG23871.1"/>
    <property type="status" value="JOINED"/>
    <property type="molecule type" value="Genomic_DNA"/>
</dbReference>
<dbReference type="EMBL" id="BN000313">
    <property type="protein sequence ID" value="CAG23871.1"/>
    <property type="status" value="JOINED"/>
    <property type="molecule type" value="Genomic_DNA"/>
</dbReference>
<dbReference type="EMBL" id="BN000314">
    <property type="protein sequence ID" value="CAG23871.1"/>
    <property type="status" value="JOINED"/>
    <property type="molecule type" value="Genomic_DNA"/>
</dbReference>
<dbReference type="CCDS" id="CCDS36576.1">
    <molecule id="P80560-1"/>
</dbReference>
<dbReference type="RefSeq" id="NP_035345.2">
    <molecule id="P80560-1"/>
    <property type="nucleotide sequence ID" value="NM_011215.2"/>
</dbReference>
<dbReference type="SMR" id="P80560"/>
<dbReference type="BioGRID" id="202504">
    <property type="interactions" value="17"/>
</dbReference>
<dbReference type="FunCoup" id="P80560">
    <property type="interactions" value="354"/>
</dbReference>
<dbReference type="IntAct" id="P80560">
    <property type="interactions" value="4"/>
</dbReference>
<dbReference type="MINT" id="P80560"/>
<dbReference type="STRING" id="10090.ENSMUSP00000064046"/>
<dbReference type="GlyCosmos" id="P80560">
    <property type="glycosylation" value="1 site, No reported glycans"/>
</dbReference>
<dbReference type="GlyGen" id="P80560">
    <property type="glycosylation" value="3 sites, 3 N-linked glycans (3 sites)"/>
</dbReference>
<dbReference type="iPTMnet" id="P80560"/>
<dbReference type="PhosphoSitePlus" id="P80560"/>
<dbReference type="SwissPalm" id="P80560"/>
<dbReference type="jPOST" id="P80560"/>
<dbReference type="PaxDb" id="10090-ENSMUSP00000064046"/>
<dbReference type="ProteomicsDB" id="301914">
    <molecule id="P80560-1"/>
</dbReference>
<dbReference type="Antibodypedia" id="1539">
    <property type="antibodies" value="372 antibodies from 31 providers"/>
</dbReference>
<dbReference type="DNASU" id="19276"/>
<dbReference type="Ensembl" id="ENSMUST00000070733.9">
    <molecule id="P80560-1"/>
    <property type="protein sequence ID" value="ENSMUSP00000064046.8"/>
    <property type="gene ID" value="ENSMUSG00000056553.15"/>
</dbReference>
<dbReference type="GeneID" id="19276"/>
<dbReference type="KEGG" id="mmu:19276"/>
<dbReference type="UCSC" id="uc007phx.2">
    <molecule id="P80560-1"/>
    <property type="organism name" value="mouse"/>
</dbReference>
<dbReference type="AGR" id="MGI:107418"/>
<dbReference type="CTD" id="5799"/>
<dbReference type="MGI" id="MGI:107418">
    <property type="gene designation" value="Ptprn2"/>
</dbReference>
<dbReference type="VEuPathDB" id="HostDB:ENSMUSG00000056553"/>
<dbReference type="eggNOG" id="KOG0793">
    <property type="taxonomic scope" value="Eukaryota"/>
</dbReference>
<dbReference type="GeneTree" id="ENSGT00940000154095"/>
<dbReference type="HOGENOM" id="CLU_007905_0_0_1"/>
<dbReference type="InParanoid" id="P80560"/>
<dbReference type="OMA" id="ENVQSHT"/>
<dbReference type="OrthoDB" id="9880441at2759"/>
<dbReference type="PhylomeDB" id="P80560"/>
<dbReference type="TreeFam" id="TF351976"/>
<dbReference type="Reactome" id="R-MMU-6798695">
    <property type="pathway name" value="Neutrophil degranulation"/>
</dbReference>
<dbReference type="BioGRID-ORCS" id="19276">
    <property type="hits" value="2 hits in 77 CRISPR screens"/>
</dbReference>
<dbReference type="ChiTaRS" id="Ptprn2">
    <property type="organism name" value="mouse"/>
</dbReference>
<dbReference type="PRO" id="PR:P80560"/>
<dbReference type="Proteomes" id="UP000000589">
    <property type="component" value="Chromosome 12"/>
</dbReference>
<dbReference type="RNAct" id="P80560">
    <property type="molecule type" value="protein"/>
</dbReference>
<dbReference type="Bgee" id="ENSMUSG00000056553">
    <property type="expression patterns" value="Expressed in dentate gyrus of hippocampal formation granule cell and 68 other cell types or tissues"/>
</dbReference>
<dbReference type="ExpressionAtlas" id="P80560">
    <property type="expression patterns" value="baseline and differential"/>
</dbReference>
<dbReference type="GO" id="GO:0043235">
    <property type="term" value="C:receptor complex"/>
    <property type="evidence" value="ECO:0000266"/>
    <property type="project" value="MGI"/>
</dbReference>
<dbReference type="GO" id="GO:0030141">
    <property type="term" value="C:secretory granule"/>
    <property type="evidence" value="ECO:0000314"/>
    <property type="project" value="MGI"/>
</dbReference>
<dbReference type="GO" id="GO:0030667">
    <property type="term" value="C:secretory granule membrane"/>
    <property type="evidence" value="ECO:0000314"/>
    <property type="project" value="UniProtKB"/>
</dbReference>
<dbReference type="GO" id="GO:0030672">
    <property type="term" value="C:synaptic vesicle membrane"/>
    <property type="evidence" value="ECO:0000314"/>
    <property type="project" value="UniProtKB"/>
</dbReference>
<dbReference type="GO" id="GO:0004725">
    <property type="term" value="F:protein tyrosine phosphatase activity"/>
    <property type="evidence" value="ECO:0007669"/>
    <property type="project" value="UniProtKB-EC"/>
</dbReference>
<dbReference type="GO" id="GO:0035773">
    <property type="term" value="P:insulin secretion involved in cellular response to glucose stimulus"/>
    <property type="evidence" value="ECO:0000315"/>
    <property type="project" value="UniProtKB"/>
</dbReference>
<dbReference type="GO" id="GO:0006629">
    <property type="term" value="P:lipid metabolic process"/>
    <property type="evidence" value="ECO:0007669"/>
    <property type="project" value="UniProtKB-KW"/>
</dbReference>
<dbReference type="GO" id="GO:0007269">
    <property type="term" value="P:neurotransmitter secretion"/>
    <property type="evidence" value="ECO:0000315"/>
    <property type="project" value="UniProtKB"/>
</dbReference>
<dbReference type="CDD" id="cd14610">
    <property type="entry name" value="R-PTP-N2"/>
    <property type="match status" value="1"/>
</dbReference>
<dbReference type="FunFam" id="3.30.70.2470:FF:000001">
    <property type="entry name" value="receptor-type tyrosine-protein phosphatase-like N isoform X1"/>
    <property type="match status" value="1"/>
</dbReference>
<dbReference type="FunFam" id="3.90.190.10:FF:000017">
    <property type="entry name" value="receptor-type tyrosine-protein phosphatase-like N isoform X2"/>
    <property type="match status" value="1"/>
</dbReference>
<dbReference type="Gene3D" id="3.90.190.10">
    <property type="entry name" value="Protein tyrosine phosphatase superfamily"/>
    <property type="match status" value="1"/>
</dbReference>
<dbReference type="Gene3D" id="3.30.70.2470">
    <property type="entry name" value="Protein-tyrosine phosphatase receptor IA-2 ectodomain"/>
    <property type="match status" value="1"/>
</dbReference>
<dbReference type="InterPro" id="IPR033522">
    <property type="entry name" value="IA-2/IA-2_beta"/>
</dbReference>
<dbReference type="InterPro" id="IPR029021">
    <property type="entry name" value="Prot-tyrosine_phosphatase-like"/>
</dbReference>
<dbReference type="InterPro" id="IPR000242">
    <property type="entry name" value="PTP_cat"/>
</dbReference>
<dbReference type="InterPro" id="IPR021613">
    <property type="entry name" value="Receptor_IA-2_dom"/>
</dbReference>
<dbReference type="InterPro" id="IPR038112">
    <property type="entry name" value="Receptor_IA-2_ectodomain_sf"/>
</dbReference>
<dbReference type="InterPro" id="IPR016130">
    <property type="entry name" value="Tyr_Pase_AS"/>
</dbReference>
<dbReference type="InterPro" id="IPR003595">
    <property type="entry name" value="Tyr_Pase_cat"/>
</dbReference>
<dbReference type="InterPro" id="IPR000387">
    <property type="entry name" value="Tyr_Pase_dom"/>
</dbReference>
<dbReference type="PANTHER" id="PTHR46106">
    <property type="entry name" value="IA-2 PROTEIN TYROSINE PHOSPHATASE, ISOFORM C"/>
    <property type="match status" value="1"/>
</dbReference>
<dbReference type="PANTHER" id="PTHR46106:SF5">
    <property type="entry name" value="RECEPTOR-TYPE TYROSINE-PROTEIN PHOSPHATASE N2"/>
    <property type="match status" value="1"/>
</dbReference>
<dbReference type="Pfam" id="PF11548">
    <property type="entry name" value="Receptor_IA-2"/>
    <property type="match status" value="1"/>
</dbReference>
<dbReference type="Pfam" id="PF00102">
    <property type="entry name" value="Y_phosphatase"/>
    <property type="match status" value="1"/>
</dbReference>
<dbReference type="PRINTS" id="PR00700">
    <property type="entry name" value="PRTYPHPHTASE"/>
</dbReference>
<dbReference type="SMART" id="SM00194">
    <property type="entry name" value="PTPc"/>
    <property type="match status" value="1"/>
</dbReference>
<dbReference type="SMART" id="SM00404">
    <property type="entry name" value="PTPc_motif"/>
    <property type="match status" value="1"/>
</dbReference>
<dbReference type="SMART" id="SM01305">
    <property type="entry name" value="RESP18"/>
    <property type="match status" value="1"/>
</dbReference>
<dbReference type="SUPFAM" id="SSF52799">
    <property type="entry name" value="(Phosphotyrosine protein) phosphatases II"/>
    <property type="match status" value="1"/>
</dbReference>
<dbReference type="PROSITE" id="PS00383">
    <property type="entry name" value="TYR_PHOSPHATASE_1"/>
    <property type="match status" value="1"/>
</dbReference>
<dbReference type="PROSITE" id="PS50056">
    <property type="entry name" value="TYR_PHOSPHATASE_2"/>
    <property type="match status" value="1"/>
</dbReference>
<dbReference type="PROSITE" id="PS50055">
    <property type="entry name" value="TYR_PHOSPHATASE_PTP"/>
    <property type="match status" value="1"/>
</dbReference>
<name>PTPR2_MOUSE</name>
<sequence>MGPPLPLLLLLLLPPPLPRALPAPASARGRQLPGRLGCLFEDGLCGSLETCVNDGVFGRCQKVPVMDTYRYEVPPGALLHLKVTLQKLSRTGFTWQDDYTQRVIAQELANLPKAYLWHGEASGPARSLQQNADNEKWFSLEREVALAKTLRRYLPYLELLSQTPTANAHSRIDHETRPAKGEDSSPENILTYVAHTSALTYPPATRAKYPDNLLRPFSRLQPDELSPKVDGDIDKQKLIAALGAYTAQRLPGENDPEPRYLVHGSARAPRPFSATALSQRWPPPPGDAKDSPSMDDDTLLQSLLKDLQQNSEVDRLGPLKEEKADSVAGAIQSDPAEGSQESHGRGAEGQPREQTDAPETMLQDHRLSEVDDPVYKEVNRLSFQLGDLLKDYGSPLLPEGPLLEKSSREEIKKSEQPEEVLSSEEETAGVEHVRSRTYSKDLFERKPNSEPQPRRLEDQFQNRAPELWEDEESLKLAAQGPPSGGLQLEVQPSEEQQGYILTGNNPLSPEKGKQLMDQVAHILRVPSSFFADIKVLGPAVTFKVSANIQNMTTADVIKAAADNKDQLEKATGLTILQSGIRPKGKLKLLPHQEEQEDSTKFILLTFLSIACILGVLLASSLAYCLRHNSHYKLKDKLSGLGADPSADATEAYQELCRQRMAIRPQDRSEGPHTSRINSVSSQFSDGPMPSPSARSSTSSWSEEPVQSNMDISTGHMILAYMEDHLKNKNRLEKEWEALCAYQAEPNSSLVAQREENAPKNRSLAVLTYDHSRILLKSQNSHGSSDYINASPIMDHDPRNPAYIATQGPLPATVADFWQMVWESGCAVIVMLTPLSENGVRQCHHYWPDEGSNLYHVYEVNLVSEHIWCQDFLVRSFYLKNLQTNETRTVTQFHFLSWYDQGVPSSTRSLLDFRRKVNKCYRGRSCPIIVHCSDGAGRSGTYVLIDMVLNKMAKGAKEIDIAATLEHLRDQRPGMVQTKEQFEFALTAVAEEVNAILKALPQ</sequence>
<feature type="signal peptide" evidence="4">
    <location>
        <begin position="1"/>
        <end position="27"/>
    </location>
</feature>
<feature type="chain" id="PRO_0000025456" description="Receptor-type tyrosine-protein phosphatase N2">
    <location>
        <begin position="28"/>
        <end position="1001"/>
    </location>
</feature>
<feature type="chain" id="PRO_0000438090" description="IA-2beta71" evidence="28">
    <location>
        <begin position="414"/>
        <end position="1001"/>
    </location>
</feature>
<feature type="chain" id="PRO_0000438071" description="IA-2beta64" evidence="28">
    <location>
        <begin position="464"/>
        <end position="1001"/>
    </location>
</feature>
<feature type="chain" id="PRO_0000438072" description="IA-2beta60" evidence="28">
    <location>
        <begin position="489"/>
        <end position="1001"/>
    </location>
</feature>
<feature type="topological domain" description="Extracellular" evidence="4">
    <location>
        <begin position="28"/>
        <end position="600"/>
    </location>
</feature>
<feature type="transmembrane region" description="Helical" evidence="4">
    <location>
        <begin position="601"/>
        <end position="621"/>
    </location>
</feature>
<feature type="topological domain" description="Cytoplasmic" evidence="4">
    <location>
        <begin position="622"/>
        <end position="1001"/>
    </location>
</feature>
<feature type="domain" description="Tyrosine-protein phosphatase" evidence="5">
    <location>
        <begin position="731"/>
        <end position="991"/>
    </location>
</feature>
<feature type="region of interest" description="Involved in localization to secretory granules; interaction with CPE" evidence="17">
    <location>
        <begin position="1"/>
        <end position="407"/>
    </location>
</feature>
<feature type="region of interest" description="Disordered" evidence="7">
    <location>
        <begin position="271"/>
        <end position="296"/>
    </location>
</feature>
<feature type="region of interest" description="Disordered" evidence="7">
    <location>
        <begin position="308"/>
        <end position="359"/>
    </location>
</feature>
<feature type="region of interest" description="Disordered" evidence="7">
    <location>
        <begin position="394"/>
        <end position="459"/>
    </location>
</feature>
<feature type="region of interest" description="Disordered" evidence="7">
    <location>
        <begin position="663"/>
        <end position="705"/>
    </location>
</feature>
<feature type="short sequence motif" description="Tyrosine-based internalization motif" evidence="2">
    <location>
        <begin position="652"/>
        <end position="661"/>
    </location>
</feature>
<feature type="short sequence motif" description="Leucine-based sorting signal" evidence="27">
    <location>
        <begin position="990"/>
        <end position="996"/>
    </location>
</feature>
<feature type="compositionally biased region" description="Basic and acidic residues" evidence="7">
    <location>
        <begin position="312"/>
        <end position="325"/>
    </location>
</feature>
<feature type="compositionally biased region" description="Basic and acidic residues" evidence="7">
    <location>
        <begin position="340"/>
        <end position="355"/>
    </location>
</feature>
<feature type="compositionally biased region" description="Low complexity" evidence="7">
    <location>
        <begin position="394"/>
        <end position="404"/>
    </location>
</feature>
<feature type="compositionally biased region" description="Basic and acidic residues" evidence="7">
    <location>
        <begin position="405"/>
        <end position="416"/>
    </location>
</feature>
<feature type="compositionally biased region" description="Acidic residues" evidence="7">
    <location>
        <begin position="417"/>
        <end position="428"/>
    </location>
</feature>
<feature type="compositionally biased region" description="Basic and acidic residues" evidence="7">
    <location>
        <begin position="429"/>
        <end position="459"/>
    </location>
</feature>
<feature type="compositionally biased region" description="Polar residues" evidence="7">
    <location>
        <begin position="674"/>
        <end position="684"/>
    </location>
</feature>
<feature type="compositionally biased region" description="Low complexity" evidence="7">
    <location>
        <begin position="691"/>
        <end position="705"/>
    </location>
</feature>
<feature type="active site" description="Phosphocysteine intermediate" evidence="5 6">
    <location>
        <position position="931"/>
    </location>
</feature>
<feature type="binding site" evidence="1">
    <location>
        <position position="899"/>
    </location>
    <ligand>
        <name>substrate</name>
    </ligand>
</feature>
<feature type="binding site" evidence="1">
    <location>
        <begin position="931"/>
        <end position="937"/>
    </location>
    <ligand>
        <name>substrate</name>
    </ligand>
</feature>
<feature type="binding site" evidence="1">
    <location>
        <position position="976"/>
    </location>
    <ligand>
        <name>substrate</name>
    </ligand>
</feature>
<feature type="site" description="Cleavage" evidence="1">
    <location>
        <begin position="413"/>
        <end position="414"/>
    </location>
</feature>
<feature type="modified residue" description="Omega-N-methylarginine" evidence="30">
    <location>
        <position position="259"/>
    </location>
</feature>
<feature type="modified residue" description="Phosphoserine" evidence="29">
    <location>
        <position position="339"/>
    </location>
</feature>
<feature type="modified residue" description="Phosphoserine" evidence="29">
    <location>
        <position position="422"/>
    </location>
</feature>
<feature type="modified residue" description="Phosphoserine" evidence="29">
    <location>
        <position position="423"/>
    </location>
</feature>
<feature type="modified residue" description="Phosphoserine" evidence="29">
    <location>
        <position position="678"/>
    </location>
</feature>
<feature type="modified residue" description="Phosphoserine" evidence="2">
    <location>
        <position position="684"/>
    </location>
</feature>
<feature type="modified residue" description="Phosphothreonine" evidence="2">
    <location>
        <position position="697"/>
    </location>
</feature>
<feature type="modified residue" description="N6-acetyllysine" evidence="3">
    <location>
        <position position="956"/>
    </location>
</feature>
<feature type="glycosylation site" description="N-linked (GlcNAc...) asparagine" evidence="4">
    <location>
        <position position="550"/>
    </location>
</feature>
<feature type="mutagenesis site" description="Impairs localization to secretory granules, promotes location at the TGN, decreases interaction with alpha- and gamma-type adaptin subunits." evidence="11 17">
    <original>EE</original>
    <variation>AA</variation>
    <location>
        <begin position="990"/>
        <end position="991"/>
    </location>
</feature>
<feature type="mutagenesis site" description="Impairs localization to secretory granules, promotes location at the plasma membrane, defective ind gamma endocytosis, highly decreases interaction with alpha- and gamma-type adaptin subunits." evidence="11">
    <original>IL</original>
    <variation>AA</variation>
    <location>
        <begin position="995"/>
        <end position="996"/>
    </location>
</feature>
<feature type="sequence conflict" description="In Ref. 1; AAB06945." evidence="26" ref="1">
    <original>A</original>
    <variation>T</variation>
    <location>
        <position position="121"/>
    </location>
</feature>
<feature type="sequence conflict" description="In Ref. 1; AAB06945." evidence="26" ref="1">
    <original>A</original>
    <variation>S</variation>
    <location>
        <position position="266"/>
    </location>
</feature>
<feature type="sequence conflict" description="In Ref. 1; AAB06945." evidence="26" ref="1">
    <original>E</original>
    <variation>D</variation>
    <location>
        <position position="369"/>
    </location>
</feature>
<feature type="sequence conflict" description="In Ref. 2; AAB39996." evidence="26" ref="2">
    <location>
        <begin position="370"/>
        <end position="371"/>
    </location>
</feature>
<feature type="sequence conflict" description="In Ref. 1; AAB06945." evidence="26" ref="1">
    <original>P</original>
    <variation>H</variation>
    <location>
        <position position="395"/>
    </location>
</feature>
<feature type="sequence conflict" description="In Ref. 2; AAB39996." evidence="26" ref="2">
    <original>I</original>
    <variation>M</variation>
    <location>
        <position position="411"/>
    </location>
</feature>
<feature type="sequence conflict" description="In Ref. 2; AAB39996." evidence="26" ref="2">
    <original>S</original>
    <variation>L</variation>
    <location>
        <position position="414"/>
    </location>
</feature>
<feature type="sequence conflict" description="In Ref. 2; AAB39996." evidence="26" ref="2">
    <original>L</original>
    <variation>H</variation>
    <location>
        <position position="586"/>
    </location>
</feature>
<feature type="sequence conflict" description="In Ref. 1; AAB06945 and 2; AAB39996." evidence="26" ref="1 2">
    <original>I</original>
    <variation>V</variation>
    <location>
        <position position="662"/>
    </location>
</feature>
<organism>
    <name type="scientific">Mus musculus</name>
    <name type="common">Mouse</name>
    <dbReference type="NCBI Taxonomy" id="10090"/>
    <lineage>
        <taxon>Eukaryota</taxon>
        <taxon>Metazoa</taxon>
        <taxon>Chordata</taxon>
        <taxon>Craniata</taxon>
        <taxon>Vertebrata</taxon>
        <taxon>Euteleostomi</taxon>
        <taxon>Mammalia</taxon>
        <taxon>Eutheria</taxon>
        <taxon>Euarchontoglires</taxon>
        <taxon>Glires</taxon>
        <taxon>Rodentia</taxon>
        <taxon>Myomorpha</taxon>
        <taxon>Muroidea</taxon>
        <taxon>Muridae</taxon>
        <taxon>Murinae</taxon>
        <taxon>Mus</taxon>
        <taxon>Mus</taxon>
    </lineage>
</organism>
<gene>
    <name type="primary">Ptprn2</name>
</gene>
<proteinExistence type="evidence at protein level"/>
<evidence type="ECO:0000250" key="1"/>
<evidence type="ECO:0000250" key="2">
    <source>
        <dbReference type="UniProtKB" id="Q63475"/>
    </source>
</evidence>
<evidence type="ECO:0000250" key="3">
    <source>
        <dbReference type="UniProtKB" id="Q92932"/>
    </source>
</evidence>
<evidence type="ECO:0000255" key="4"/>
<evidence type="ECO:0000255" key="5">
    <source>
        <dbReference type="PROSITE-ProRule" id="PRU00160"/>
    </source>
</evidence>
<evidence type="ECO:0000255" key="6">
    <source>
        <dbReference type="PROSITE-ProRule" id="PRU10044"/>
    </source>
</evidence>
<evidence type="ECO:0000256" key="7">
    <source>
        <dbReference type="SAM" id="MobiDB-lite"/>
    </source>
</evidence>
<evidence type="ECO:0000269" key="8">
    <source>
    </source>
</evidence>
<evidence type="ECO:0000269" key="9">
    <source>
    </source>
</evidence>
<evidence type="ECO:0000269" key="10">
    <source>
    </source>
</evidence>
<evidence type="ECO:0000269" key="11">
    <source>
    </source>
</evidence>
<evidence type="ECO:0000269" key="12">
    <source>
    </source>
</evidence>
<evidence type="ECO:0000269" key="13">
    <source>
    </source>
</evidence>
<evidence type="ECO:0000269" key="14">
    <source>
    </source>
</evidence>
<evidence type="ECO:0000269" key="15">
    <source>
    </source>
</evidence>
<evidence type="ECO:0000269" key="16">
    <source>
    </source>
</evidence>
<evidence type="ECO:0000269" key="17">
    <source>
    </source>
</evidence>
<evidence type="ECO:0000269" key="18">
    <source>
    </source>
</evidence>
<evidence type="ECO:0000269" key="19">
    <source>
    </source>
</evidence>
<evidence type="ECO:0000269" key="20">
    <source>
    </source>
</evidence>
<evidence type="ECO:0000303" key="21">
    <source>
    </source>
</evidence>
<evidence type="ECO:0000303" key="22">
    <source>
    </source>
</evidence>
<evidence type="ECO:0000303" key="23">
    <source>
    </source>
</evidence>
<evidence type="ECO:0000303" key="24">
    <source>
    </source>
</evidence>
<evidence type="ECO:0000303" key="25">
    <source>
    </source>
</evidence>
<evidence type="ECO:0000305" key="26"/>
<evidence type="ECO:0000305" key="27">
    <source>
    </source>
</evidence>
<evidence type="ECO:0000305" key="28">
    <source>
    </source>
</evidence>
<evidence type="ECO:0007744" key="29">
    <source>
    </source>
</evidence>
<evidence type="ECO:0007744" key="30">
    <source>
    </source>
</evidence>
<accession>P80560</accession>
<accession>O09134</accession>
<accession>P70328</accession>
<accession>Q1RLJ1</accession>
<reference key="1">
    <citation type="journal article" date="1996" name="Development">
        <title>PTP-NP, a new member of the receptor protein tyrosine phosphatase family, implicated in development of nervous system and pancreatic endocrine cells.</title>
        <authorList>
            <person name="Chiang M.-K."/>
            <person name="Flanagan J.G."/>
        </authorList>
    </citation>
    <scope>NUCLEOTIDE SEQUENCE [MRNA]</scope>
    <scope>TISSUE SPECIFICITY</scope>
    <scope>DEVELOPMENTAL STAGE</scope>
    <source>
        <strain>ICR</strain>
        <tissue>Brain</tissue>
    </source>
</reference>
<reference key="2">
    <citation type="journal article" date="1996" name="Proc. Natl. Acad. Sci. U.S.A.">
        <title>Identification of a second transmembrane protein tyrosine phosphatase, IA-2beta, as an autoantigen in insulin-dependent diabetes mellitus: precursor of the 37-kDa tryptic fragment.</title>
        <authorList>
            <person name="Lu J."/>
            <person name="Li Q."/>
            <person name="Xie H."/>
            <person name="Chen Z.-J."/>
            <person name="Borovitskaya A.E."/>
            <person name="Maclaren N.K."/>
            <person name="Notkins A.L."/>
            <person name="Lan M.S."/>
        </authorList>
    </citation>
    <scope>NUCLEOTIDE SEQUENCE [MRNA] OF 282-1001</scope>
    <scope>PROTEOLYTIC CLEAVAGE</scope>
    <scope>TISSUE SPECIFICITY</scope>
    <source>
        <tissue>Neonatal brain</tissue>
    </source>
</reference>
<reference key="3">
    <citation type="journal article" date="2007" name="Int. J. Mol. Med.">
        <title>Detection of proteolytic cleavages of diabetes-associated protein IA-2 beta in the pancreas and the brain using novel anti-IA-2 beta monoclonal antibodies.</title>
        <authorList>
            <person name="Kawakami T."/>
            <person name="Saeki K."/>
            <person name="Takeyama N."/>
            <person name="Wu G."/>
            <person name="Sakudo A."/>
            <person name="Matsumoto Y."/>
            <person name="Hayashi T."/>
            <person name="Onodera T."/>
        </authorList>
    </citation>
    <scope>PROTEIN SEQUENCE OF 414-418 (IA-2BETA71)</scope>
    <scope>PROTEIN SEQUENCE OF 464-468 (IA-2BETA64)</scope>
    <scope>PROTEIN SEQUENCE OF 489-493 (IA-2BETA60)</scope>
    <scope>PROTEOLYTIC CLEAVAGE</scope>
</reference>
<reference key="4">
    <citation type="journal article" date="2002" name="J. Biol. Chem.">
        <title>Multimerization of the protein-tyrosine phosphatase (PTP)-like insulin-dependent diabetes mellitus autoantigens IA-2 and IA-2beta with receptor PTPs (RPTPs). Inhibition of RPTPalpha enzymatic activity.</title>
        <authorList>
            <person name="Gross S."/>
            <person name="Blanchetot C."/>
            <person name="Schepens J."/>
            <person name="Albet S."/>
            <person name="Lammers R."/>
            <person name="den Hertog J."/>
            <person name="Hendriks W."/>
        </authorList>
    </citation>
    <scope>FUNCTION</scope>
    <scope>SELF-ASSOCIATION</scope>
    <scope>INTERACTION WITH PTPRN AND PTPRA</scope>
</reference>
<reference key="5">
    <citation type="journal article" date="2004" name="Biochem. Biophys. Res. Commun.">
        <title>Recycling of the dense-core vesicle membrane protein phogrin in Min6 beta-cells.</title>
        <authorList>
            <person name="Vo Y.P."/>
            <person name="Hutton J.C."/>
            <person name="Angleson J.K."/>
        </authorList>
    </citation>
    <scope>SUBCELLULAR LOCATION</scope>
</reference>
<reference key="6">
    <citation type="journal article" date="2004" name="Diabetes">
        <title>Targeted disruption of the IA-2beta gene causes glucose intolerance and impairs insulin secretion but does not prevent the development of diabetes in NOD mice.</title>
        <authorList>
            <person name="Kubosaki A."/>
            <person name="Gross S."/>
            <person name="Miura J."/>
            <person name="Saeki K."/>
            <person name="Zhu M."/>
            <person name="Nakamura S."/>
            <person name="Hendriks W."/>
            <person name="Notkins A.L."/>
        </authorList>
    </citation>
    <scope>IDENTIFICATION</scope>
    <scope>DISRUPTION PHENOTYPE</scope>
    <scope>TISSUE SPECIFICITY</scope>
    <source>
        <strain>C57BL/6J</strain>
    </source>
</reference>
<reference key="7">
    <citation type="journal article" date="2005" name="Traffic">
        <title>Cytoplasmic transport signal is involved in phogrin targeting and localization to secretory granules.</title>
        <authorList>
            <person name="Torii S."/>
            <person name="Saito N."/>
            <person name="Kawano A."/>
            <person name="Zhao S."/>
            <person name="Izumi T."/>
            <person name="Takeuchi T."/>
        </authorList>
    </citation>
    <scope>SUBCELLULAR LOCATION</scope>
    <scope>LEUCINE-BASED SORTING SIGNAL</scope>
    <scope>MUTAGENESIS OF 990-GLU-GLU-991 AND 995-ILE-LEU-996</scope>
    <scope>INTERACTION WITH AP2A1/2 AND AP1G1</scope>
</reference>
<reference key="8">
    <citation type="journal article" date="2006" name="Endocrinology">
        <title>Disruption of the transmembrane dense core vesicle proteins IA-2 and IA-2beta causes female infertility.</title>
        <authorList>
            <person name="Kubosaki A."/>
            <person name="Nakamura S."/>
            <person name="Clark A."/>
            <person name="Morris J.F."/>
            <person name="Notkins A.L."/>
        </authorList>
    </citation>
    <scope>DISRUPTION PHENOTYPE</scope>
    <scope>FUNCTION</scope>
</reference>
<reference key="9">
    <citation type="journal article" date="2006" name="Proc. Natl. Acad. Sci. U.S.A.">
        <title>IA-2beta, but not IA-2, is induced by ghrelin and inhibits glucose-stimulated insulin secretion.</title>
        <authorList>
            <person name="Doi A."/>
            <person name="Shono T."/>
            <person name="Nishi M."/>
            <person name="Furuta H."/>
            <person name="Sasaki H."/>
            <person name="Nanjo K."/>
        </authorList>
    </citation>
    <scope>INDUCTION</scope>
    <scope>FUNCTION</scope>
</reference>
<reference key="10">
    <citation type="journal article" date="2009" name="Am. J. Physiol.">
        <title>Dense-core vesicle proteins IA-2 and IA-2{beta} affect renin synthesis and secretion through the {beta}-adrenergic pathway.</title>
        <authorList>
            <person name="Kim S.M."/>
            <person name="Theilig F."/>
            <person name="Qin Y."/>
            <person name="Cai T."/>
            <person name="Mizel D."/>
            <person name="Faulhaber-Walter R."/>
            <person name="Hirai H."/>
            <person name="Bachmann S."/>
            <person name="Briggs J.P."/>
            <person name="Notkins A.L."/>
            <person name="Schnermann J."/>
        </authorList>
    </citation>
    <scope>FUNCTION</scope>
</reference>
<reference key="11">
    <citation type="journal article" date="2009" name="Neuroscience">
        <title>Disturbances in the secretion of neurotransmitters in IA-2/IA-2beta null mice: changes in behavior, learning and lifespan.</title>
        <authorList>
            <person name="Nishimura T."/>
            <person name="Kubosaki A."/>
            <person name="Ito Y."/>
            <person name="Notkins A.L."/>
        </authorList>
    </citation>
    <scope>DISRUPTION PHENOTYPE</scope>
    <scope>FUNCTION</scope>
    <scope>SUBCELLULAR LOCATION</scope>
    <scope>TISSUE SPECIFICITY</scope>
</reference>
<reference key="12">
    <citation type="journal article" date="2010" name="Cell">
        <title>A tissue-specific atlas of mouse protein phosphorylation and expression.</title>
        <authorList>
            <person name="Huttlin E.L."/>
            <person name="Jedrychowski M.P."/>
            <person name="Elias J.E."/>
            <person name="Goswami T."/>
            <person name="Rad R."/>
            <person name="Beausoleil S.A."/>
            <person name="Villen J."/>
            <person name="Haas W."/>
            <person name="Sowa M.E."/>
            <person name="Gygi S.P."/>
        </authorList>
    </citation>
    <scope>PHOSPHORYLATION [LARGE SCALE ANALYSIS] AT SER-339; SER-422; SER-423 AND SER-678</scope>
    <scope>IDENTIFICATION BY MASS SPECTROMETRY [LARGE SCALE ANALYSIS]</scope>
    <source>
        <tissue>Brain</tissue>
        <tissue>Brown adipose tissue</tissue>
    </source>
</reference>
<reference key="13">
    <citation type="journal article" date="2011" name="Diabetologia">
        <title>Deletion of Ia-2 and/or Ia-2beta in mice decreases insulin secretion by reducing the number of dense core vesicles.</title>
        <authorList>
            <person name="Cai T."/>
            <person name="Hirai H."/>
            <person name="Zhang G."/>
            <person name="Zhang M."/>
            <person name="Takahashi N."/>
            <person name="Kasai H."/>
            <person name="Satin L.S."/>
            <person name="Leapman R.D."/>
            <person name="Notkins A.L."/>
        </authorList>
    </citation>
    <scope>DISRUPTION PHENOTYPE</scope>
    <scope>FUNCTION</scope>
</reference>
<reference key="14">
    <citation type="journal article" date="2011" name="Traffic">
        <title>Luminal interaction of phogrin with carboxypeptidase E for effective targeting to secretory granules.</title>
        <authorList>
            <person name="Saito N."/>
            <person name="Takeuchi T."/>
            <person name="Kawano A."/>
            <person name="Hosaka M."/>
            <person name="Hou N."/>
            <person name="Torii S."/>
        </authorList>
    </citation>
    <scope>INTERACTION WITH CPE</scope>
    <scope>SUBCELLULAR LOCATION</scope>
    <scope>MUTAGENESIS OF 990-GLU-GLU-991</scope>
</reference>
<reference key="15">
    <citation type="journal article" date="2012" name="Cell. Mol. Life Sci.">
        <title>Loss of huntingtin-associated protein 1 impairs insulin secretion from pancreatic beta-cells.</title>
        <authorList>
            <person name="Cape A."/>
            <person name="Chen X."/>
            <person name="Wang C.E."/>
            <person name="O'Neill A."/>
            <person name="Lin Y.F."/>
            <person name="He J."/>
            <person name="Xu X.S."/>
            <person name="Yi H."/>
            <person name="Li H."/>
            <person name="Li S."/>
            <person name="Li X.J."/>
        </authorList>
    </citation>
    <scope>INTERACTION WITH HAP1</scope>
</reference>
<reference key="16">
    <citation type="journal article" date="2014" name="Mol. Cell. Proteomics">
        <title>Immunoaffinity enrichment and mass spectrometry analysis of protein methylation.</title>
        <authorList>
            <person name="Guo A."/>
            <person name="Gu H."/>
            <person name="Zhou J."/>
            <person name="Mulhern D."/>
            <person name="Wang Y."/>
            <person name="Lee K.A."/>
            <person name="Yang V."/>
            <person name="Aguiar M."/>
            <person name="Kornhauser J."/>
            <person name="Jia X."/>
            <person name="Ren J."/>
            <person name="Beausoleil S.A."/>
            <person name="Silva J.C."/>
            <person name="Vemulapalli V."/>
            <person name="Bedford M.T."/>
            <person name="Comb M.J."/>
        </authorList>
    </citation>
    <scope>METHYLATION [LARGE SCALE ANALYSIS] AT ARG-259</scope>
    <scope>IDENTIFICATION BY MASS SPECTROMETRY [LARGE SCALE ANALYSIS]</scope>
    <source>
        <tissue>Embryo</tissue>
    </source>
</reference>